<dbReference type="EC" id="4.1.2.-"/>
<dbReference type="EMBL" id="AL591688">
    <property type="protein sequence ID" value="CAC41493.1"/>
    <property type="molecule type" value="Genomic_DNA"/>
</dbReference>
<dbReference type="RefSeq" id="NP_384212.2">
    <property type="nucleotide sequence ID" value="NC_003047.1"/>
</dbReference>
<dbReference type="SMR" id="Q92T74"/>
<dbReference type="EnsemblBacteria" id="CAC41493">
    <property type="protein sequence ID" value="CAC41493"/>
    <property type="gene ID" value="SMc04146"/>
</dbReference>
<dbReference type="KEGG" id="sme:SMc04146"/>
<dbReference type="PATRIC" id="fig|266834.11.peg.1464"/>
<dbReference type="eggNOG" id="COG3957">
    <property type="taxonomic scope" value="Bacteria"/>
</dbReference>
<dbReference type="OrthoDB" id="9768449at2"/>
<dbReference type="Proteomes" id="UP000001976">
    <property type="component" value="Chromosome"/>
</dbReference>
<dbReference type="GO" id="GO:0016832">
    <property type="term" value="F:aldehyde-lyase activity"/>
    <property type="evidence" value="ECO:0007669"/>
    <property type="project" value="UniProtKB-UniRule"/>
</dbReference>
<dbReference type="GO" id="GO:0005975">
    <property type="term" value="P:carbohydrate metabolic process"/>
    <property type="evidence" value="ECO:0007669"/>
    <property type="project" value="InterPro"/>
</dbReference>
<dbReference type="CDD" id="cd02011">
    <property type="entry name" value="TPP_PK"/>
    <property type="match status" value="1"/>
</dbReference>
<dbReference type="FunFam" id="3.40.50.970:FF:000091">
    <property type="entry name" value="Xylulose-5-phosphate/fructose-6-phosphate phosphoketolase"/>
    <property type="match status" value="1"/>
</dbReference>
<dbReference type="Gene3D" id="3.40.50.920">
    <property type="match status" value="1"/>
</dbReference>
<dbReference type="Gene3D" id="3.40.50.970">
    <property type="match status" value="2"/>
</dbReference>
<dbReference type="HAMAP" id="MF_01403">
    <property type="entry name" value="Phosphoketolase"/>
    <property type="match status" value="1"/>
</dbReference>
<dbReference type="InterPro" id="IPR023962">
    <property type="entry name" value="Phosphoketolase"/>
</dbReference>
<dbReference type="InterPro" id="IPR029061">
    <property type="entry name" value="THDP-binding"/>
</dbReference>
<dbReference type="InterPro" id="IPR009014">
    <property type="entry name" value="Transketo_C/PFOR_II"/>
</dbReference>
<dbReference type="InterPro" id="IPR005593">
    <property type="entry name" value="Xul5P/Fru6P_PKetolase"/>
</dbReference>
<dbReference type="InterPro" id="IPR018969">
    <property type="entry name" value="Xul5P/Fru6P_PKetolase_C"/>
</dbReference>
<dbReference type="InterPro" id="IPR019790">
    <property type="entry name" value="Xul5P/Fru6P_PKetolase_CS"/>
</dbReference>
<dbReference type="InterPro" id="IPR018970">
    <property type="entry name" value="Xul5P/Fru6P_PKetolase_N"/>
</dbReference>
<dbReference type="InterPro" id="IPR019789">
    <property type="entry name" value="Xul5P/Fru6P_PKetolase_ThDP_BS"/>
</dbReference>
<dbReference type="NCBIfam" id="NF003616">
    <property type="entry name" value="PRK05261.1-1"/>
    <property type="match status" value="1"/>
</dbReference>
<dbReference type="NCBIfam" id="NF003617">
    <property type="entry name" value="PRK05261.1-2"/>
    <property type="match status" value="1"/>
</dbReference>
<dbReference type="NCBIfam" id="NF003619">
    <property type="entry name" value="PRK05261.1-4"/>
    <property type="match status" value="1"/>
</dbReference>
<dbReference type="NCBIfam" id="NF003621">
    <property type="entry name" value="PRK05261.1-6"/>
    <property type="match status" value="1"/>
</dbReference>
<dbReference type="PANTHER" id="PTHR31273">
    <property type="entry name" value="PHOSPHOKETOLASE-RELATED"/>
    <property type="match status" value="1"/>
</dbReference>
<dbReference type="PANTHER" id="PTHR31273:SF0">
    <property type="entry name" value="PHOSPHOKETOLASE-RELATED"/>
    <property type="match status" value="1"/>
</dbReference>
<dbReference type="Pfam" id="PF03894">
    <property type="entry name" value="XFP"/>
    <property type="match status" value="1"/>
</dbReference>
<dbReference type="Pfam" id="PF09363">
    <property type="entry name" value="XFP_C"/>
    <property type="match status" value="1"/>
</dbReference>
<dbReference type="Pfam" id="PF09364">
    <property type="entry name" value="XFP_N"/>
    <property type="match status" value="1"/>
</dbReference>
<dbReference type="PIRSF" id="PIRSF017245">
    <property type="entry name" value="Phosphoketolase"/>
    <property type="match status" value="1"/>
</dbReference>
<dbReference type="SUPFAM" id="SSF52518">
    <property type="entry name" value="Thiamin diphosphate-binding fold (THDP-binding)"/>
    <property type="match status" value="2"/>
</dbReference>
<dbReference type="PROSITE" id="PS60002">
    <property type="entry name" value="PHOSPHOKETOLASE_1"/>
    <property type="match status" value="1"/>
</dbReference>
<dbReference type="PROSITE" id="PS60003">
    <property type="entry name" value="PHOSPHOKETOLASE_2"/>
    <property type="match status" value="1"/>
</dbReference>
<protein>
    <recommendedName>
        <fullName>Probable phosphoketolase 1</fullName>
        <ecNumber>4.1.2.-</ecNumber>
    </recommendedName>
</protein>
<organism>
    <name type="scientific">Rhizobium meliloti (strain 1021)</name>
    <name type="common">Ensifer meliloti</name>
    <name type="synonym">Sinorhizobium meliloti</name>
    <dbReference type="NCBI Taxonomy" id="266834"/>
    <lineage>
        <taxon>Bacteria</taxon>
        <taxon>Pseudomonadati</taxon>
        <taxon>Pseudomonadota</taxon>
        <taxon>Alphaproteobacteria</taxon>
        <taxon>Hyphomicrobiales</taxon>
        <taxon>Rhizobiaceae</taxon>
        <taxon>Sinorhizobium/Ensifer group</taxon>
        <taxon>Sinorhizobium</taxon>
    </lineage>
</organism>
<name>PHK1_RHIME</name>
<reference key="1">
    <citation type="journal article" date="2001" name="Proc. Natl. Acad. Sci. U.S.A.">
        <title>Analysis of the chromosome sequence of the legume symbiont Sinorhizobium meliloti strain 1021.</title>
        <authorList>
            <person name="Capela D."/>
            <person name="Barloy-Hubler F."/>
            <person name="Gouzy J."/>
            <person name="Bothe G."/>
            <person name="Ampe F."/>
            <person name="Batut J."/>
            <person name="Boistard P."/>
            <person name="Becker A."/>
            <person name="Boutry M."/>
            <person name="Cadieu E."/>
            <person name="Dreano S."/>
            <person name="Gloux S."/>
            <person name="Godrie T."/>
            <person name="Goffeau A."/>
            <person name="Kahn D."/>
            <person name="Kiss E."/>
            <person name="Lelaure V."/>
            <person name="Masuy D."/>
            <person name="Pohl T."/>
            <person name="Portetelle D."/>
            <person name="Puehler A."/>
            <person name="Purnelle B."/>
            <person name="Ramsperger U."/>
            <person name="Renard C."/>
            <person name="Thebault P."/>
            <person name="Vandenbol M."/>
            <person name="Weidner S."/>
            <person name="Galibert F."/>
        </authorList>
    </citation>
    <scope>NUCLEOTIDE SEQUENCE [LARGE SCALE GENOMIC DNA]</scope>
    <source>
        <strain>1021</strain>
    </source>
</reference>
<reference key="2">
    <citation type="journal article" date="2001" name="Science">
        <title>The composite genome of the legume symbiont Sinorhizobium meliloti.</title>
        <authorList>
            <person name="Galibert F."/>
            <person name="Finan T.M."/>
            <person name="Long S.R."/>
            <person name="Puehler A."/>
            <person name="Abola P."/>
            <person name="Ampe F."/>
            <person name="Barloy-Hubler F."/>
            <person name="Barnett M.J."/>
            <person name="Becker A."/>
            <person name="Boistard P."/>
            <person name="Bothe G."/>
            <person name="Boutry M."/>
            <person name="Bowser L."/>
            <person name="Buhrmester J."/>
            <person name="Cadieu E."/>
            <person name="Capela D."/>
            <person name="Chain P."/>
            <person name="Cowie A."/>
            <person name="Davis R.W."/>
            <person name="Dreano S."/>
            <person name="Federspiel N.A."/>
            <person name="Fisher R.F."/>
            <person name="Gloux S."/>
            <person name="Godrie T."/>
            <person name="Goffeau A."/>
            <person name="Golding B."/>
            <person name="Gouzy J."/>
            <person name="Gurjal M."/>
            <person name="Hernandez-Lucas I."/>
            <person name="Hong A."/>
            <person name="Huizar L."/>
            <person name="Hyman R.W."/>
            <person name="Jones T."/>
            <person name="Kahn D."/>
            <person name="Kahn M.L."/>
            <person name="Kalman S."/>
            <person name="Keating D.H."/>
            <person name="Kiss E."/>
            <person name="Komp C."/>
            <person name="Lelaure V."/>
            <person name="Masuy D."/>
            <person name="Palm C."/>
            <person name="Peck M.C."/>
            <person name="Pohl T.M."/>
            <person name="Portetelle D."/>
            <person name="Purnelle B."/>
            <person name="Ramsperger U."/>
            <person name="Surzycki R."/>
            <person name="Thebault P."/>
            <person name="Vandenbol M."/>
            <person name="Vorhoelter F.J."/>
            <person name="Weidner S."/>
            <person name="Wells D.H."/>
            <person name="Wong K."/>
            <person name="Yeh K.-C."/>
            <person name="Batut J."/>
        </authorList>
    </citation>
    <scope>NUCLEOTIDE SEQUENCE [LARGE SCALE GENOMIC DNA]</scope>
    <source>
        <strain>1021</strain>
    </source>
</reference>
<gene>
    <name type="ordered locus">R00106</name>
    <name type="ORF">SMc04146</name>
</gene>
<sequence>MDAYWRASNYLSVGQIYLLDNPLLSEPLKREHIKPRLLGHWGTSPGLNMLYVHLNRVIKRDDLEMMYVIGPGHGGPSLVAHAYLEGTYSEVYPDISQDAEGLRKLFKQFSFPGGIPSHVAPETPGSIHEGGELGYALSHAYGAAFDNPELIVACVVGDGEAETGPLATGWHGNKFLNPARDGCVLPILHLNGYKIANPCFLARIPREELQKFFEGMGYAPLFVEGHDPADVHQQLAAALDTALADIRRIQTDARVNGNLKRPAWPMIVFRTPKGWTCPAEIDGKKCEDYWRSHQVPMGDMDKPEHIRILEGWMKSYRPEELFDGDGRLTAELAALAPTGRRRMSDNPHANGGLLLRDLKMPDFRDYAVAVQSPGAATAESARVMGSYLRDVMKLNLKSGNFRLFSPDENNSNRWQDVLEVTDRCFMADIYPEDDHLSPDGRLMEVLSEHQSQGWLEGYLLTGRHGFFSCYEAFIHIIDSMFNQHAKWLKVCNEIPWRRPIASLNYFLSSHVWRQDHNGFSHQDPGFIDHVVNKKADIIRVYLPPDANTLLSVTDHCLRSRNYINVVVAGKQPSPQWLTMDQAVKHCTEGLGIWEWASNDKGCEPDVVMACCGDVPTLETLAAVQLLREHLPELKVRVINVVNLMKLQPSGEHPHGLPDRDFDALFTKDKPIIFAFHGYPWLIHRLTYRRTNHANLHVRGYKEEGTTTTPFDMVVLNHLDRFHLVEDVIDRLPQLGARAAYFKQAIHERLIDHRHHIEKYGEDMPVISGWKWGAGSAGKAQGTSTKGDNV</sequence>
<keyword id="KW-0456">Lyase</keyword>
<keyword id="KW-1185">Reference proteome</keyword>
<keyword id="KW-0786">Thiamine pyrophosphate</keyword>
<evidence type="ECO:0000305" key="1"/>
<proteinExistence type="inferred from homology"/>
<accession>Q92T74</accession>
<feature type="chain" id="PRO_0000193886" description="Probable phosphoketolase 1">
    <location>
        <begin position="1"/>
        <end position="789"/>
    </location>
</feature>
<comment type="cofactor">
    <cofactor evidence="1">
        <name>thiamine diphosphate</name>
        <dbReference type="ChEBI" id="CHEBI:58937"/>
    </cofactor>
</comment>
<comment type="similarity">
    <text evidence="1">Belongs to the XFP family.</text>
</comment>